<protein>
    <recommendedName>
        <fullName evidence="1">Bifunctional protein FolD 1</fullName>
    </recommendedName>
    <domain>
        <recommendedName>
            <fullName evidence="1">Methylenetetrahydrofolate dehydrogenase</fullName>
            <ecNumber evidence="1">1.5.1.5</ecNumber>
        </recommendedName>
    </domain>
    <domain>
        <recommendedName>
            <fullName evidence="1">Methenyltetrahydrofolate cyclohydrolase</fullName>
            <ecNumber evidence="1">3.5.4.9</ecNumber>
        </recommendedName>
    </domain>
</protein>
<name>FOLD1_RHIWR</name>
<feature type="chain" id="PRO_0000340599" description="Bifunctional protein FolD 1">
    <location>
        <begin position="1"/>
        <end position="295"/>
    </location>
</feature>
<feature type="binding site" evidence="1">
    <location>
        <begin position="165"/>
        <end position="167"/>
    </location>
    <ligand>
        <name>NADP(+)</name>
        <dbReference type="ChEBI" id="CHEBI:58349"/>
    </ligand>
</feature>
<feature type="binding site" evidence="1">
    <location>
        <position position="190"/>
    </location>
    <ligand>
        <name>NADP(+)</name>
        <dbReference type="ChEBI" id="CHEBI:58349"/>
    </ligand>
</feature>
<feature type="binding site" evidence="1">
    <location>
        <position position="231"/>
    </location>
    <ligand>
        <name>NADP(+)</name>
        <dbReference type="ChEBI" id="CHEBI:58349"/>
    </ligand>
</feature>
<sequence>MAAIIDGKAIAAAIRAEVAAGVTALTAEGGAAPGLAVVLVGEDPASLVYVGRKIAQTRQAGIRSFEHRLPAGTGEADLLGLIERLNRDDEVHGILVQLPLPRHIRADRVLDAIDPLKDVDGFHPVNVGRLSIGTDGLVPCTPLGCMLLLETVIDDFRGLKAVVIGKSNIVGKPVAMLLLERECTVTVTHILTRNLPDIVRTADIVVVAAGSPGLVRGDWVRPGAVVIDVGINRIGEPGKDSRLVGDAAFDELGHAAAITPVPGGVGPMTVACLLRNTLVAARRQQGADASPKKGA</sequence>
<dbReference type="EC" id="1.5.1.5" evidence="1"/>
<dbReference type="EC" id="3.5.4.9" evidence="1"/>
<dbReference type="EMBL" id="CP000699">
    <property type="protein sequence ID" value="ABQ67307.1"/>
    <property type="molecule type" value="Genomic_DNA"/>
</dbReference>
<dbReference type="SMR" id="A5V4U1"/>
<dbReference type="STRING" id="392499.Swit_0940"/>
<dbReference type="PaxDb" id="392499-Swit_0940"/>
<dbReference type="KEGG" id="swi:Swit_0940"/>
<dbReference type="eggNOG" id="COG0190">
    <property type="taxonomic scope" value="Bacteria"/>
</dbReference>
<dbReference type="HOGENOM" id="CLU_034045_1_2_5"/>
<dbReference type="OrthoDB" id="9803580at2"/>
<dbReference type="UniPathway" id="UPA00193"/>
<dbReference type="Proteomes" id="UP000001989">
    <property type="component" value="Chromosome"/>
</dbReference>
<dbReference type="GO" id="GO:0005829">
    <property type="term" value="C:cytosol"/>
    <property type="evidence" value="ECO:0007669"/>
    <property type="project" value="TreeGrafter"/>
</dbReference>
<dbReference type="GO" id="GO:0004477">
    <property type="term" value="F:methenyltetrahydrofolate cyclohydrolase activity"/>
    <property type="evidence" value="ECO:0007669"/>
    <property type="project" value="UniProtKB-UniRule"/>
</dbReference>
<dbReference type="GO" id="GO:0004488">
    <property type="term" value="F:methylenetetrahydrofolate dehydrogenase (NADP+) activity"/>
    <property type="evidence" value="ECO:0007669"/>
    <property type="project" value="UniProtKB-UniRule"/>
</dbReference>
<dbReference type="GO" id="GO:0000105">
    <property type="term" value="P:L-histidine biosynthetic process"/>
    <property type="evidence" value="ECO:0007669"/>
    <property type="project" value="UniProtKB-KW"/>
</dbReference>
<dbReference type="GO" id="GO:0009086">
    <property type="term" value="P:methionine biosynthetic process"/>
    <property type="evidence" value="ECO:0007669"/>
    <property type="project" value="UniProtKB-KW"/>
</dbReference>
<dbReference type="GO" id="GO:0006164">
    <property type="term" value="P:purine nucleotide biosynthetic process"/>
    <property type="evidence" value="ECO:0007669"/>
    <property type="project" value="UniProtKB-KW"/>
</dbReference>
<dbReference type="GO" id="GO:0035999">
    <property type="term" value="P:tetrahydrofolate interconversion"/>
    <property type="evidence" value="ECO:0007669"/>
    <property type="project" value="UniProtKB-UniRule"/>
</dbReference>
<dbReference type="CDD" id="cd01080">
    <property type="entry name" value="NAD_bind_m-THF_DH_Cyclohyd"/>
    <property type="match status" value="1"/>
</dbReference>
<dbReference type="FunFam" id="3.40.50.720:FF:000006">
    <property type="entry name" value="Bifunctional protein FolD"/>
    <property type="match status" value="1"/>
</dbReference>
<dbReference type="FunFam" id="3.40.50.10860:FF:000005">
    <property type="entry name" value="C-1-tetrahydrofolate synthase, cytoplasmic, putative"/>
    <property type="match status" value="1"/>
</dbReference>
<dbReference type="Gene3D" id="3.40.50.10860">
    <property type="entry name" value="Leucine Dehydrogenase, chain A, domain 1"/>
    <property type="match status" value="1"/>
</dbReference>
<dbReference type="Gene3D" id="3.40.50.720">
    <property type="entry name" value="NAD(P)-binding Rossmann-like Domain"/>
    <property type="match status" value="1"/>
</dbReference>
<dbReference type="HAMAP" id="MF_01576">
    <property type="entry name" value="THF_DHG_CYH"/>
    <property type="match status" value="1"/>
</dbReference>
<dbReference type="InterPro" id="IPR046346">
    <property type="entry name" value="Aminoacid_DH-like_N_sf"/>
</dbReference>
<dbReference type="InterPro" id="IPR036291">
    <property type="entry name" value="NAD(P)-bd_dom_sf"/>
</dbReference>
<dbReference type="InterPro" id="IPR000672">
    <property type="entry name" value="THF_DH/CycHdrlase"/>
</dbReference>
<dbReference type="InterPro" id="IPR020630">
    <property type="entry name" value="THF_DH/CycHdrlase_cat_dom"/>
</dbReference>
<dbReference type="InterPro" id="IPR020867">
    <property type="entry name" value="THF_DH/CycHdrlase_CS"/>
</dbReference>
<dbReference type="InterPro" id="IPR020631">
    <property type="entry name" value="THF_DH/CycHdrlase_NAD-bd_dom"/>
</dbReference>
<dbReference type="NCBIfam" id="NF008058">
    <property type="entry name" value="PRK10792.1"/>
    <property type="match status" value="1"/>
</dbReference>
<dbReference type="NCBIfam" id="NF010785">
    <property type="entry name" value="PRK14188.1"/>
    <property type="match status" value="1"/>
</dbReference>
<dbReference type="PANTHER" id="PTHR48099:SF5">
    <property type="entry name" value="C-1-TETRAHYDROFOLATE SYNTHASE, CYTOPLASMIC"/>
    <property type="match status" value="1"/>
</dbReference>
<dbReference type="PANTHER" id="PTHR48099">
    <property type="entry name" value="C-1-TETRAHYDROFOLATE SYNTHASE, CYTOPLASMIC-RELATED"/>
    <property type="match status" value="1"/>
</dbReference>
<dbReference type="Pfam" id="PF00763">
    <property type="entry name" value="THF_DHG_CYH"/>
    <property type="match status" value="1"/>
</dbReference>
<dbReference type="Pfam" id="PF02882">
    <property type="entry name" value="THF_DHG_CYH_C"/>
    <property type="match status" value="1"/>
</dbReference>
<dbReference type="PRINTS" id="PR00085">
    <property type="entry name" value="THFDHDRGNASE"/>
</dbReference>
<dbReference type="SUPFAM" id="SSF53223">
    <property type="entry name" value="Aminoacid dehydrogenase-like, N-terminal domain"/>
    <property type="match status" value="1"/>
</dbReference>
<dbReference type="SUPFAM" id="SSF51735">
    <property type="entry name" value="NAD(P)-binding Rossmann-fold domains"/>
    <property type="match status" value="1"/>
</dbReference>
<dbReference type="PROSITE" id="PS00766">
    <property type="entry name" value="THF_DHG_CYH_1"/>
    <property type="match status" value="1"/>
</dbReference>
<dbReference type="PROSITE" id="PS00767">
    <property type="entry name" value="THF_DHG_CYH_2"/>
    <property type="match status" value="1"/>
</dbReference>
<keyword id="KW-0028">Amino-acid biosynthesis</keyword>
<keyword id="KW-0368">Histidine biosynthesis</keyword>
<keyword id="KW-0378">Hydrolase</keyword>
<keyword id="KW-0486">Methionine biosynthesis</keyword>
<keyword id="KW-0511">Multifunctional enzyme</keyword>
<keyword id="KW-0521">NADP</keyword>
<keyword id="KW-0554">One-carbon metabolism</keyword>
<keyword id="KW-0560">Oxidoreductase</keyword>
<keyword id="KW-0658">Purine biosynthesis</keyword>
<keyword id="KW-1185">Reference proteome</keyword>
<proteinExistence type="inferred from homology"/>
<organism>
    <name type="scientific">Rhizorhabdus wittichii (strain DSM 6014 / CCUG 31198 / JCM 15750 / NBRC 105917 / EY 4224 / RW1)</name>
    <name type="common">Sphingomonas wittichii</name>
    <dbReference type="NCBI Taxonomy" id="392499"/>
    <lineage>
        <taxon>Bacteria</taxon>
        <taxon>Pseudomonadati</taxon>
        <taxon>Pseudomonadota</taxon>
        <taxon>Alphaproteobacteria</taxon>
        <taxon>Sphingomonadales</taxon>
        <taxon>Sphingomonadaceae</taxon>
        <taxon>Rhizorhabdus</taxon>
    </lineage>
</organism>
<accession>A5V4U1</accession>
<evidence type="ECO:0000255" key="1">
    <source>
        <dbReference type="HAMAP-Rule" id="MF_01576"/>
    </source>
</evidence>
<comment type="function">
    <text evidence="1">Catalyzes the oxidation of 5,10-methylenetetrahydrofolate to 5,10-methenyltetrahydrofolate and then the hydrolysis of 5,10-methenyltetrahydrofolate to 10-formyltetrahydrofolate.</text>
</comment>
<comment type="catalytic activity">
    <reaction evidence="1">
        <text>(6R)-5,10-methylene-5,6,7,8-tetrahydrofolate + NADP(+) = (6R)-5,10-methenyltetrahydrofolate + NADPH</text>
        <dbReference type="Rhea" id="RHEA:22812"/>
        <dbReference type="ChEBI" id="CHEBI:15636"/>
        <dbReference type="ChEBI" id="CHEBI:57455"/>
        <dbReference type="ChEBI" id="CHEBI:57783"/>
        <dbReference type="ChEBI" id="CHEBI:58349"/>
        <dbReference type="EC" id="1.5.1.5"/>
    </reaction>
</comment>
<comment type="catalytic activity">
    <reaction evidence="1">
        <text>(6R)-5,10-methenyltetrahydrofolate + H2O = (6R)-10-formyltetrahydrofolate + H(+)</text>
        <dbReference type="Rhea" id="RHEA:23700"/>
        <dbReference type="ChEBI" id="CHEBI:15377"/>
        <dbReference type="ChEBI" id="CHEBI:15378"/>
        <dbReference type="ChEBI" id="CHEBI:57455"/>
        <dbReference type="ChEBI" id="CHEBI:195366"/>
        <dbReference type="EC" id="3.5.4.9"/>
    </reaction>
</comment>
<comment type="pathway">
    <text evidence="1">One-carbon metabolism; tetrahydrofolate interconversion.</text>
</comment>
<comment type="subunit">
    <text evidence="1">Homodimer.</text>
</comment>
<comment type="similarity">
    <text evidence="1">Belongs to the tetrahydrofolate dehydrogenase/cyclohydrolase family.</text>
</comment>
<reference key="1">
    <citation type="journal article" date="2010" name="J. Bacteriol.">
        <title>Genome sequence of the dioxin-mineralizing bacterium Sphingomonas wittichii RW1.</title>
        <authorList>
            <person name="Miller T.R."/>
            <person name="Delcher A.L."/>
            <person name="Salzberg S.L."/>
            <person name="Saunders E."/>
            <person name="Detter J.C."/>
            <person name="Halden R.U."/>
        </authorList>
    </citation>
    <scope>NUCLEOTIDE SEQUENCE [LARGE SCALE GENOMIC DNA]</scope>
    <source>
        <strain>DSM 6014 / CCUG 31198 / JCM 15750 / NBRC 105917 / EY 4224 / RW1</strain>
    </source>
</reference>
<gene>
    <name evidence="1" type="primary">folD1</name>
    <name type="ordered locus">Swit_0940</name>
</gene>